<dbReference type="EMBL" id="Z11974">
    <property type="protein sequence ID" value="CAA78028.1"/>
    <property type="molecule type" value="mRNA"/>
</dbReference>
<dbReference type="EMBL" id="AL845290">
    <property type="status" value="NOT_ANNOTATED_CDS"/>
    <property type="molecule type" value="Genomic_DNA"/>
</dbReference>
<dbReference type="EMBL" id="AL845434">
    <property type="status" value="NOT_ANNOTATED_CDS"/>
    <property type="molecule type" value="Genomic_DNA"/>
</dbReference>
<dbReference type="EMBL" id="AK079897">
    <property type="protein sequence ID" value="BAC37778.1"/>
    <property type="molecule type" value="mRNA"/>
</dbReference>
<dbReference type="CCDS" id="CCDS15700.1"/>
<dbReference type="PIR" id="A48925">
    <property type="entry name" value="A48925"/>
</dbReference>
<dbReference type="RefSeq" id="NP_032651.2">
    <property type="nucleotide sequence ID" value="NM_008625.2"/>
</dbReference>
<dbReference type="PDB" id="1DQG">
    <property type="method" value="X-ray"/>
    <property type="resolution" value="1.70 A"/>
    <property type="chains" value="A=20-154"/>
</dbReference>
<dbReference type="PDB" id="1DQO">
    <property type="method" value="X-ray"/>
    <property type="resolution" value="2.20 A"/>
    <property type="chains" value="A=20-154"/>
</dbReference>
<dbReference type="PDB" id="1FWU">
    <property type="method" value="X-ray"/>
    <property type="resolution" value="1.90 A"/>
    <property type="chains" value="A=21-154"/>
</dbReference>
<dbReference type="PDB" id="1FWV">
    <property type="method" value="X-ray"/>
    <property type="resolution" value="2.20 A"/>
    <property type="chains" value="A=21-154"/>
</dbReference>
<dbReference type="PDBsum" id="1DQG"/>
<dbReference type="PDBsum" id="1DQO"/>
<dbReference type="PDBsum" id="1FWU"/>
<dbReference type="PDBsum" id="1FWV"/>
<dbReference type="SMR" id="Q61830"/>
<dbReference type="BioGRID" id="201484">
    <property type="interactions" value="2"/>
</dbReference>
<dbReference type="FunCoup" id="Q61830">
    <property type="interactions" value="300"/>
</dbReference>
<dbReference type="IntAct" id="Q61830">
    <property type="interactions" value="2"/>
</dbReference>
<dbReference type="STRING" id="10090.ENSMUSP00000028045"/>
<dbReference type="UniLectin" id="Q61830"/>
<dbReference type="GlyCosmos" id="Q61830">
    <property type="glycosylation" value="7 sites, No reported glycans"/>
</dbReference>
<dbReference type="GlyGen" id="Q61830">
    <property type="glycosylation" value="9 sites, 1 N-linked glycan (1 site), 1 O-linked glycan (1 site)"/>
</dbReference>
<dbReference type="PhosphoSitePlus" id="Q61830"/>
<dbReference type="SwissPalm" id="Q61830"/>
<dbReference type="CPTAC" id="non-CPTAC-3930"/>
<dbReference type="jPOST" id="Q61830"/>
<dbReference type="PaxDb" id="10090-ENSMUSP00000028045"/>
<dbReference type="ProteomicsDB" id="291441"/>
<dbReference type="Antibodypedia" id="72990">
    <property type="antibodies" value="839 antibodies from 43 providers"/>
</dbReference>
<dbReference type="DNASU" id="17533"/>
<dbReference type="Ensembl" id="ENSMUST00000028045.4">
    <property type="protein sequence ID" value="ENSMUSP00000028045.3"/>
    <property type="gene ID" value="ENSMUSG00000026712.4"/>
</dbReference>
<dbReference type="GeneID" id="17533"/>
<dbReference type="KEGG" id="mmu:17533"/>
<dbReference type="UCSC" id="uc008ikk.2">
    <property type="organism name" value="mouse"/>
</dbReference>
<dbReference type="AGR" id="MGI:97142"/>
<dbReference type="CTD" id="4360"/>
<dbReference type="MGI" id="MGI:97142">
    <property type="gene designation" value="Mrc1"/>
</dbReference>
<dbReference type="VEuPathDB" id="HostDB:ENSMUSG00000026712"/>
<dbReference type="eggNOG" id="KOG4297">
    <property type="taxonomic scope" value="Eukaryota"/>
</dbReference>
<dbReference type="GeneTree" id="ENSGT01050000244842"/>
<dbReference type="HOGENOM" id="CLU_002069_0_0_1"/>
<dbReference type="InParanoid" id="Q61830"/>
<dbReference type="OMA" id="WIDKWRV"/>
<dbReference type="OrthoDB" id="6356110at2759"/>
<dbReference type="PhylomeDB" id="Q61830"/>
<dbReference type="TreeFam" id="TF316663"/>
<dbReference type="Reactome" id="R-MMU-1236978">
    <property type="pathway name" value="Cross-presentation of soluble exogenous antigens (endosomes)"/>
</dbReference>
<dbReference type="BioGRID-ORCS" id="17533">
    <property type="hits" value="5 hits in 77 CRISPR screens"/>
</dbReference>
<dbReference type="EvolutionaryTrace" id="Q61830"/>
<dbReference type="PRO" id="PR:Q61830"/>
<dbReference type="Proteomes" id="UP000000589">
    <property type="component" value="Chromosome 2"/>
</dbReference>
<dbReference type="RNAct" id="Q61830">
    <property type="molecule type" value="protein"/>
</dbReference>
<dbReference type="Bgee" id="ENSMUSG00000026712">
    <property type="expression patterns" value="Expressed in stroma of bone marrow and 214 other cell types or tissues"/>
</dbReference>
<dbReference type="ExpressionAtlas" id="Q61830">
    <property type="expression patterns" value="baseline and differential"/>
</dbReference>
<dbReference type="GO" id="GO:0009986">
    <property type="term" value="C:cell surface"/>
    <property type="evidence" value="ECO:0000314"/>
    <property type="project" value="MGI"/>
</dbReference>
<dbReference type="GO" id="GO:0010008">
    <property type="term" value="C:endosome membrane"/>
    <property type="evidence" value="ECO:0000250"/>
    <property type="project" value="UniProtKB"/>
</dbReference>
<dbReference type="GO" id="GO:0005886">
    <property type="term" value="C:plasma membrane"/>
    <property type="evidence" value="ECO:0000250"/>
    <property type="project" value="UniProtKB"/>
</dbReference>
<dbReference type="GO" id="GO:0038024">
    <property type="term" value="F:cargo receptor activity"/>
    <property type="evidence" value="ECO:0000250"/>
    <property type="project" value="UniProtKB"/>
</dbReference>
<dbReference type="GO" id="GO:0005537">
    <property type="term" value="F:D-mannose binding"/>
    <property type="evidence" value="ECO:0000314"/>
    <property type="project" value="MGI"/>
</dbReference>
<dbReference type="GO" id="GO:0004888">
    <property type="term" value="F:transmembrane signaling receptor activity"/>
    <property type="evidence" value="ECO:0000314"/>
    <property type="project" value="MGI"/>
</dbReference>
<dbReference type="GO" id="GO:0071353">
    <property type="term" value="P:cellular response to interleukin-4"/>
    <property type="evidence" value="ECO:0000314"/>
    <property type="project" value="MGI"/>
</dbReference>
<dbReference type="GO" id="GO:0071222">
    <property type="term" value="P:cellular response to lipopolysaccharide"/>
    <property type="evidence" value="ECO:0000314"/>
    <property type="project" value="MGI"/>
</dbReference>
<dbReference type="GO" id="GO:0071346">
    <property type="term" value="P:cellular response to type II interferon"/>
    <property type="evidence" value="ECO:0000314"/>
    <property type="project" value="MGI"/>
</dbReference>
<dbReference type="GO" id="GO:0006898">
    <property type="term" value="P:receptor-mediated endocytosis"/>
    <property type="evidence" value="ECO:0000250"/>
    <property type="project" value="UniProtKB"/>
</dbReference>
<dbReference type="CDD" id="cd23407">
    <property type="entry name" value="beta-trefoil_Ricin_MRC1"/>
    <property type="match status" value="1"/>
</dbReference>
<dbReference type="CDD" id="cd00037">
    <property type="entry name" value="CLECT"/>
    <property type="match status" value="7"/>
</dbReference>
<dbReference type="CDD" id="cd00062">
    <property type="entry name" value="FN2"/>
    <property type="match status" value="1"/>
</dbReference>
<dbReference type="FunFam" id="2.10.10.10:FF:000001">
    <property type="entry name" value="Fibronectin 1a isoform 1"/>
    <property type="match status" value="1"/>
</dbReference>
<dbReference type="FunFam" id="3.10.100.10:FF:000014">
    <property type="entry name" value="Macrophage mannose receptor 1"/>
    <property type="match status" value="1"/>
</dbReference>
<dbReference type="FunFam" id="3.10.100.10:FF:000023">
    <property type="entry name" value="Macrophage mannose receptor 1"/>
    <property type="match status" value="1"/>
</dbReference>
<dbReference type="FunFam" id="2.80.10.50:FF:000032">
    <property type="entry name" value="macrophage mannose receptor 1"/>
    <property type="match status" value="1"/>
</dbReference>
<dbReference type="FunFam" id="3.10.100.10:FF:000016">
    <property type="entry name" value="macrophage mannose receptor 1"/>
    <property type="match status" value="1"/>
</dbReference>
<dbReference type="FunFam" id="3.10.100.10:FF:000031">
    <property type="entry name" value="macrophage mannose receptor 1"/>
    <property type="match status" value="1"/>
</dbReference>
<dbReference type="FunFam" id="3.10.100.10:FF:000022">
    <property type="entry name" value="Mannose receptor C-type 1"/>
    <property type="match status" value="1"/>
</dbReference>
<dbReference type="FunFam" id="3.10.100.10:FF:000025">
    <property type="entry name" value="Mannose receptor C-type 1"/>
    <property type="match status" value="1"/>
</dbReference>
<dbReference type="FunFam" id="3.10.100.10:FF:000030">
    <property type="entry name" value="Mannose receptor C-type 1"/>
    <property type="match status" value="1"/>
</dbReference>
<dbReference type="FunFam" id="3.10.100.10:FF:000027">
    <property type="entry name" value="Mannose receptor, C type 1"/>
    <property type="match status" value="1"/>
</dbReference>
<dbReference type="Gene3D" id="2.80.10.50">
    <property type="match status" value="1"/>
</dbReference>
<dbReference type="Gene3D" id="2.10.10.10">
    <property type="entry name" value="Fibronectin, type II, collagen-binding"/>
    <property type="match status" value="1"/>
</dbReference>
<dbReference type="Gene3D" id="3.10.100.10">
    <property type="entry name" value="Mannose-Binding Protein A, subunit A"/>
    <property type="match status" value="8"/>
</dbReference>
<dbReference type="InterPro" id="IPR001304">
    <property type="entry name" value="C-type_lectin-like"/>
</dbReference>
<dbReference type="InterPro" id="IPR016186">
    <property type="entry name" value="C-type_lectin-like/link_sf"/>
</dbReference>
<dbReference type="InterPro" id="IPR050111">
    <property type="entry name" value="C-type_lectin/snaclec_domain"/>
</dbReference>
<dbReference type="InterPro" id="IPR018378">
    <property type="entry name" value="C-type_lectin_CS"/>
</dbReference>
<dbReference type="InterPro" id="IPR016187">
    <property type="entry name" value="CTDL_fold"/>
</dbReference>
<dbReference type="InterPro" id="IPR000562">
    <property type="entry name" value="FN_type2_dom"/>
</dbReference>
<dbReference type="InterPro" id="IPR036943">
    <property type="entry name" value="FN_type2_sf"/>
</dbReference>
<dbReference type="InterPro" id="IPR013806">
    <property type="entry name" value="Kringle-like"/>
</dbReference>
<dbReference type="InterPro" id="IPR035992">
    <property type="entry name" value="Ricin_B-like_lectins"/>
</dbReference>
<dbReference type="InterPro" id="IPR000772">
    <property type="entry name" value="Ricin_B_lectin"/>
</dbReference>
<dbReference type="PANTHER" id="PTHR22803">
    <property type="entry name" value="MANNOSE, PHOSPHOLIPASE, LECTIN RECEPTOR RELATED"/>
    <property type="match status" value="1"/>
</dbReference>
<dbReference type="Pfam" id="PF24562">
    <property type="entry name" value="CysR_MRC2_N"/>
    <property type="match status" value="1"/>
</dbReference>
<dbReference type="Pfam" id="PF00040">
    <property type="entry name" value="fn2"/>
    <property type="match status" value="1"/>
</dbReference>
<dbReference type="Pfam" id="PF00059">
    <property type="entry name" value="Lectin_C"/>
    <property type="match status" value="8"/>
</dbReference>
<dbReference type="PRINTS" id="PR00013">
    <property type="entry name" value="FNTYPEII"/>
</dbReference>
<dbReference type="SMART" id="SM00034">
    <property type="entry name" value="CLECT"/>
    <property type="match status" value="8"/>
</dbReference>
<dbReference type="SMART" id="SM00059">
    <property type="entry name" value="FN2"/>
    <property type="match status" value="1"/>
</dbReference>
<dbReference type="SMART" id="SM00458">
    <property type="entry name" value="RICIN"/>
    <property type="match status" value="1"/>
</dbReference>
<dbReference type="SUPFAM" id="SSF56436">
    <property type="entry name" value="C-type lectin-like"/>
    <property type="match status" value="8"/>
</dbReference>
<dbReference type="SUPFAM" id="SSF57440">
    <property type="entry name" value="Kringle-like"/>
    <property type="match status" value="1"/>
</dbReference>
<dbReference type="SUPFAM" id="SSF50370">
    <property type="entry name" value="Ricin B-like lectins"/>
    <property type="match status" value="1"/>
</dbReference>
<dbReference type="PROSITE" id="PS00615">
    <property type="entry name" value="C_TYPE_LECTIN_1"/>
    <property type="match status" value="6"/>
</dbReference>
<dbReference type="PROSITE" id="PS50041">
    <property type="entry name" value="C_TYPE_LECTIN_2"/>
    <property type="match status" value="8"/>
</dbReference>
<dbReference type="PROSITE" id="PS00023">
    <property type="entry name" value="FN2_1"/>
    <property type="match status" value="1"/>
</dbReference>
<dbReference type="PROSITE" id="PS51092">
    <property type="entry name" value="FN2_2"/>
    <property type="match status" value="1"/>
</dbReference>
<dbReference type="PROSITE" id="PS50231">
    <property type="entry name" value="RICIN_B_LECTIN"/>
    <property type="match status" value="1"/>
</dbReference>
<reference key="1">
    <citation type="journal article" date="1992" name="Blood">
        <title>Characterization of the murine macrophage mannose receptor: demonstration that the downregulation of receptor expression mediated by interferon-gamma occurs at the level of transcription.</title>
        <authorList>
            <person name="Harris N."/>
            <person name="Rits M."/>
            <person name="Chang G."/>
            <person name="Ezekowitz R.A.B."/>
        </authorList>
    </citation>
    <scope>NUCLEOTIDE SEQUENCE [MRNA]</scope>
    <scope>FUNCTION</scope>
    <scope>SUBCELLULAR LOCATION</scope>
    <scope>TISSUE SPECIFICITY</scope>
    <scope>INDUCTION</scope>
    <source>
        <strain>C57BL/6J</strain>
        <tissue>Macrophage</tissue>
    </source>
</reference>
<reference key="2">
    <citation type="journal article" date="2009" name="PLoS Biol.">
        <title>Lineage-specific biology revealed by a finished genome assembly of the mouse.</title>
        <authorList>
            <person name="Church D.M."/>
            <person name="Goodstadt L."/>
            <person name="Hillier L.W."/>
            <person name="Zody M.C."/>
            <person name="Goldstein S."/>
            <person name="She X."/>
            <person name="Bult C.J."/>
            <person name="Agarwala R."/>
            <person name="Cherry J.L."/>
            <person name="DiCuccio M."/>
            <person name="Hlavina W."/>
            <person name="Kapustin Y."/>
            <person name="Meric P."/>
            <person name="Maglott D."/>
            <person name="Birtle Z."/>
            <person name="Marques A.C."/>
            <person name="Graves T."/>
            <person name="Zhou S."/>
            <person name="Teague B."/>
            <person name="Potamousis K."/>
            <person name="Churas C."/>
            <person name="Place M."/>
            <person name="Herschleb J."/>
            <person name="Runnheim R."/>
            <person name="Forrest D."/>
            <person name="Amos-Landgraf J."/>
            <person name="Schwartz D.C."/>
            <person name="Cheng Z."/>
            <person name="Lindblad-Toh K."/>
            <person name="Eichler E.E."/>
            <person name="Ponting C.P."/>
        </authorList>
    </citation>
    <scope>NUCLEOTIDE SEQUENCE [LARGE SCALE GENOMIC DNA]</scope>
    <source>
        <strain>C57BL/6J</strain>
    </source>
</reference>
<reference key="3">
    <citation type="journal article" date="2005" name="Science">
        <title>The transcriptional landscape of the mammalian genome.</title>
        <authorList>
            <person name="Carninci P."/>
            <person name="Kasukawa T."/>
            <person name="Katayama S."/>
            <person name="Gough J."/>
            <person name="Frith M.C."/>
            <person name="Maeda N."/>
            <person name="Oyama R."/>
            <person name="Ravasi T."/>
            <person name="Lenhard B."/>
            <person name="Wells C."/>
            <person name="Kodzius R."/>
            <person name="Shimokawa K."/>
            <person name="Bajic V.B."/>
            <person name="Brenner S.E."/>
            <person name="Batalov S."/>
            <person name="Forrest A.R."/>
            <person name="Zavolan M."/>
            <person name="Davis M.J."/>
            <person name="Wilming L.G."/>
            <person name="Aidinis V."/>
            <person name="Allen J.E."/>
            <person name="Ambesi-Impiombato A."/>
            <person name="Apweiler R."/>
            <person name="Aturaliya R.N."/>
            <person name="Bailey T.L."/>
            <person name="Bansal M."/>
            <person name="Baxter L."/>
            <person name="Beisel K.W."/>
            <person name="Bersano T."/>
            <person name="Bono H."/>
            <person name="Chalk A.M."/>
            <person name="Chiu K.P."/>
            <person name="Choudhary V."/>
            <person name="Christoffels A."/>
            <person name="Clutterbuck D.R."/>
            <person name="Crowe M.L."/>
            <person name="Dalla E."/>
            <person name="Dalrymple B.P."/>
            <person name="de Bono B."/>
            <person name="Della Gatta G."/>
            <person name="di Bernardo D."/>
            <person name="Down T."/>
            <person name="Engstrom P."/>
            <person name="Fagiolini M."/>
            <person name="Faulkner G."/>
            <person name="Fletcher C.F."/>
            <person name="Fukushima T."/>
            <person name="Furuno M."/>
            <person name="Futaki S."/>
            <person name="Gariboldi M."/>
            <person name="Georgii-Hemming P."/>
            <person name="Gingeras T.R."/>
            <person name="Gojobori T."/>
            <person name="Green R.E."/>
            <person name="Gustincich S."/>
            <person name="Harbers M."/>
            <person name="Hayashi Y."/>
            <person name="Hensch T.K."/>
            <person name="Hirokawa N."/>
            <person name="Hill D."/>
            <person name="Huminiecki L."/>
            <person name="Iacono M."/>
            <person name="Ikeo K."/>
            <person name="Iwama A."/>
            <person name="Ishikawa T."/>
            <person name="Jakt M."/>
            <person name="Kanapin A."/>
            <person name="Katoh M."/>
            <person name="Kawasawa Y."/>
            <person name="Kelso J."/>
            <person name="Kitamura H."/>
            <person name="Kitano H."/>
            <person name="Kollias G."/>
            <person name="Krishnan S.P."/>
            <person name="Kruger A."/>
            <person name="Kummerfeld S.K."/>
            <person name="Kurochkin I.V."/>
            <person name="Lareau L.F."/>
            <person name="Lazarevic D."/>
            <person name="Lipovich L."/>
            <person name="Liu J."/>
            <person name="Liuni S."/>
            <person name="McWilliam S."/>
            <person name="Madan Babu M."/>
            <person name="Madera M."/>
            <person name="Marchionni L."/>
            <person name="Matsuda H."/>
            <person name="Matsuzawa S."/>
            <person name="Miki H."/>
            <person name="Mignone F."/>
            <person name="Miyake S."/>
            <person name="Morris K."/>
            <person name="Mottagui-Tabar S."/>
            <person name="Mulder N."/>
            <person name="Nakano N."/>
            <person name="Nakauchi H."/>
            <person name="Ng P."/>
            <person name="Nilsson R."/>
            <person name="Nishiguchi S."/>
            <person name="Nishikawa S."/>
            <person name="Nori F."/>
            <person name="Ohara O."/>
            <person name="Okazaki Y."/>
            <person name="Orlando V."/>
            <person name="Pang K.C."/>
            <person name="Pavan W.J."/>
            <person name="Pavesi G."/>
            <person name="Pesole G."/>
            <person name="Petrovsky N."/>
            <person name="Piazza S."/>
            <person name="Reed J."/>
            <person name="Reid J.F."/>
            <person name="Ring B.Z."/>
            <person name="Ringwald M."/>
            <person name="Rost B."/>
            <person name="Ruan Y."/>
            <person name="Salzberg S.L."/>
            <person name="Sandelin A."/>
            <person name="Schneider C."/>
            <person name="Schoenbach C."/>
            <person name="Sekiguchi K."/>
            <person name="Semple C.A."/>
            <person name="Seno S."/>
            <person name="Sessa L."/>
            <person name="Sheng Y."/>
            <person name="Shibata Y."/>
            <person name="Shimada H."/>
            <person name="Shimada K."/>
            <person name="Silva D."/>
            <person name="Sinclair B."/>
            <person name="Sperling S."/>
            <person name="Stupka E."/>
            <person name="Sugiura K."/>
            <person name="Sultana R."/>
            <person name="Takenaka Y."/>
            <person name="Taki K."/>
            <person name="Tammoja K."/>
            <person name="Tan S.L."/>
            <person name="Tang S."/>
            <person name="Taylor M.S."/>
            <person name="Tegner J."/>
            <person name="Teichmann S.A."/>
            <person name="Ueda H.R."/>
            <person name="van Nimwegen E."/>
            <person name="Verardo R."/>
            <person name="Wei C.L."/>
            <person name="Yagi K."/>
            <person name="Yamanishi H."/>
            <person name="Zabarovsky E."/>
            <person name="Zhu S."/>
            <person name="Zimmer A."/>
            <person name="Hide W."/>
            <person name="Bult C."/>
            <person name="Grimmond S.M."/>
            <person name="Teasdale R.D."/>
            <person name="Liu E.T."/>
            <person name="Brusic V."/>
            <person name="Quackenbush J."/>
            <person name="Wahlestedt C."/>
            <person name="Mattick J.S."/>
            <person name="Hume D.A."/>
            <person name="Kai C."/>
            <person name="Sasaki D."/>
            <person name="Tomaru Y."/>
            <person name="Fukuda S."/>
            <person name="Kanamori-Katayama M."/>
            <person name="Suzuki M."/>
            <person name="Aoki J."/>
            <person name="Arakawa T."/>
            <person name="Iida J."/>
            <person name="Imamura K."/>
            <person name="Itoh M."/>
            <person name="Kato T."/>
            <person name="Kawaji H."/>
            <person name="Kawagashira N."/>
            <person name="Kawashima T."/>
            <person name="Kojima M."/>
            <person name="Kondo S."/>
            <person name="Konno H."/>
            <person name="Nakano K."/>
            <person name="Ninomiya N."/>
            <person name="Nishio T."/>
            <person name="Okada M."/>
            <person name="Plessy C."/>
            <person name="Shibata K."/>
            <person name="Shiraki T."/>
            <person name="Suzuki S."/>
            <person name="Tagami M."/>
            <person name="Waki K."/>
            <person name="Watahiki A."/>
            <person name="Okamura-Oho Y."/>
            <person name="Suzuki H."/>
            <person name="Kawai J."/>
            <person name="Hayashizaki Y."/>
        </authorList>
    </citation>
    <scope>NUCLEOTIDE SEQUENCE [LARGE SCALE MRNA] OF 1318-1456</scope>
    <source>
        <strain>C57BL/6J</strain>
        <tissue>Thymus</tissue>
    </source>
</reference>
<reference key="4">
    <citation type="journal article" date="2010" name="Cell">
        <title>A tissue-specific atlas of mouse protein phosphorylation and expression.</title>
        <authorList>
            <person name="Huttlin E.L."/>
            <person name="Jedrychowski M.P."/>
            <person name="Elias J.E."/>
            <person name="Goswami T."/>
            <person name="Rad R."/>
            <person name="Beausoleil S.A."/>
            <person name="Villen J."/>
            <person name="Haas W."/>
            <person name="Sowa M.E."/>
            <person name="Gygi S.P."/>
        </authorList>
    </citation>
    <scope>IDENTIFICATION BY MASS SPECTROMETRY [LARGE SCALE ANALYSIS]</scope>
    <source>
        <tissue>Brown adipose tissue</tissue>
        <tissue>Heart</tissue>
        <tissue>Kidney</tissue>
        <tissue>Liver</tissue>
        <tissue>Lung</tissue>
        <tissue>Pancreas</tissue>
        <tissue>Spleen</tissue>
        <tissue>Testis</tissue>
    </source>
</reference>
<reference key="5">
    <citation type="journal article" date="2000" name="J. Exp. Med.">
        <title>Crystal structure of the cysteine-rich domain of mannose receptor complexed with a sulfated carbohydrate ligand.</title>
        <authorList>
            <person name="Liu Y."/>
            <person name="Chirino A.J."/>
            <person name="Misulovin Z."/>
            <person name="Leteux C."/>
            <person name="Feizi T."/>
            <person name="Nussenzweig M.C."/>
            <person name="Bjorkman P.J."/>
        </authorList>
    </citation>
    <scope>X-RAY CRYSTALLOGRAPHY (1.7 ANGSTROMS) OF 20-153 IN COMPLEX WITH CARBOHYDRATE LIGAND</scope>
</reference>
<reference key="6">
    <citation type="journal article" date="2001" name="J. Mol. Biol.">
        <title>The molecular mechanism of sulfated carbohydrate recognition by the cysteine-rich domain of mannose receptor.</title>
        <authorList>
            <person name="Liu Y."/>
            <person name="Misulovin Z."/>
            <person name="Bjorkman P.J."/>
        </authorList>
    </citation>
    <scope>X-RAY CRYSTALLOGRAPHY (1.9 ANGSTROMS) OF 21-154 IN COMPLEX WITH CARBOHYDRATE LIGAND</scope>
</reference>
<sequence length="1456" mass="164981">MRLLLLLAFISVIPVSVQLLDARQFLIYNEDHKRCVDALSAISVQTATCNPEAESQKFRWVSDSQIMSVAFKLCLGVPSKTDWASVTLYACDSKSEYQKWECKNDTLFGIKGTELYFNYGNRQEKNIKLYKGSGLWSRWKVYGTTDDLCSRGYEAMYSLLGNANGAVCAFPFKFENKWYADCTSAGRSDGWLWCGTTTDYDKDKLFGFCPLHFEGSERLWNKDPLTGILYQINSKSALTWHQARASCKQQNADLLSVTEIHEQMYLTGLTSSLSSGLWIGLNSLSVRSGWQWAGGSPFRYLNWLPGSPSSEPGKSCVSLNPGKNAKWENLECVQKLGYICKKGNNTLNPFIIPSASDVPTGCPNQWWPYAGHCYRIHREEKKIQKYALQACRKEGGDLASIHSIEEFDFIFSQLGYEPNDELWIGLNDIKIQMYFEWSDGTPVTFTKWLPGEPSHENNRQEDCVVMKGKDGYWADRACEQPLGYICKMVSQSHAVVPEGADKGCRKGWKRHGFYCYLIGSTLSTFTDANHTCTNEKAYLTTVEDRYEQAFLTSLVGLRPEKYFWTGLSDVQNKGTFRWTVDEQVQFTHWNADMPGRKAGCVAMKTGVAGGLWDVLSCEEKAKFVCKHWAEGVTRPPEPTTTPEPKCPENWGTTSKTSMCFKLYAKGKHEKKTWFESRDFCKAIGGELASIKSKDEQQVIWRLITSSGSYHELFWLGLTYGSPSEGFTWSDGSPVSYENWAYGEPNNYQNVEYCGELKGDPGMSWNDINCEHLNNWICQIQKGKTLLPEPTPAPQDNPPVTADGWVIYKDYQYYFSKEKETMDNARAFCKKNFGDLATIKSESEKKFLWKYINKNGGQSPYFIGMLISMDKKFIWMDGSKVDFVAWATGEPNFANDDENCVTMYTNSGFWNDINCGYPNNFICQRHNSSINATAMPTTPTTPGGCKEGWHLYKNKCFKIFGFANEEKKSWQDARQACKGLKGNLVSIENAQEQAFVTYHMRDSTFNAWTGLNDINAEHMFLWTAGQGVHYTNWGKGYPGGRRSSLSYEDADCVVVIGGNSREAGTWMDDTCDSKQGYICQTQTDPSLPVSPTTTPKDGFVTYGKSSYSLMKLKLPWHEAETYCKDHTSLLASILDPYSNAFAWMKMHPFNVPIWIALNSNLTNNEYTWTDRWRVRYTNWGADEPKLKSACVYMDVDGYWRTSYCNESFYFLCKKSDEIPATEPPQLPGKCPESEQTAWIPFYGHCYYFESSFTRSWGQASLECLRMGASLVSIETAAESSFLSYRVEPLKSKTNFWIGMFRNVEGKWLWLNDNPVSFVNWKTGDPSGERNDCVVLASSSGLWNNIHCSSYKGFICKMPKIIDPVTTHSSITTKADQRKMDPQPKGSSKAAGVVTVVLLIVIGAGVAAYFFYKKRHALHIPQEATFENTLYFNSNLSPGTSDTKDLMGNIEQNEHAII</sequence>
<accession>Q61830</accession>
<accession>Q8C502</accession>
<name>MRC1_MOUSE</name>
<evidence type="ECO:0000250" key="1"/>
<evidence type="ECO:0000255" key="2"/>
<evidence type="ECO:0000255" key="3">
    <source>
        <dbReference type="PROSITE-ProRule" id="PRU00040"/>
    </source>
</evidence>
<evidence type="ECO:0000255" key="4">
    <source>
        <dbReference type="PROSITE-ProRule" id="PRU00174"/>
    </source>
</evidence>
<evidence type="ECO:0000255" key="5">
    <source>
        <dbReference type="PROSITE-ProRule" id="PRU00479"/>
    </source>
</evidence>
<evidence type="ECO:0000269" key="6">
    <source>
    </source>
</evidence>
<evidence type="ECO:0000305" key="7"/>
<evidence type="ECO:0007829" key="8">
    <source>
        <dbReference type="PDB" id="1DQG"/>
    </source>
</evidence>
<evidence type="ECO:0007829" key="9">
    <source>
        <dbReference type="PDB" id="1FWU"/>
    </source>
</evidence>
<keyword id="KW-0002">3D-structure</keyword>
<keyword id="KW-0106">Calcium</keyword>
<keyword id="KW-1003">Cell membrane</keyword>
<keyword id="KW-1015">Disulfide bond</keyword>
<keyword id="KW-0254">Endocytosis</keyword>
<keyword id="KW-0967">Endosome</keyword>
<keyword id="KW-0325">Glycoprotein</keyword>
<keyword id="KW-0430">Lectin</keyword>
<keyword id="KW-0472">Membrane</keyword>
<keyword id="KW-0675">Receptor</keyword>
<keyword id="KW-1185">Reference proteome</keyword>
<keyword id="KW-0677">Repeat</keyword>
<keyword id="KW-0732">Signal</keyword>
<keyword id="KW-0812">Transmembrane</keyword>
<keyword id="KW-1133">Transmembrane helix</keyword>
<comment type="function">
    <text evidence="6">Mediates the endocytosis of glycoproteins by macrophages. Binds both sulfated and non-sulfated polysaccharide chains. Acts as phagocytic receptor for bacteria, fungi and other pathogens.</text>
</comment>
<comment type="interaction">
    <interactant intactId="EBI-642509">
        <id>Q61830</id>
    </interactant>
    <interactant intactId="EBI-25474821">
        <id>P0DTC2</id>
        <label>S</label>
    </interactant>
    <organismsDiffer>true</organismsDiffer>
    <experiments>2</experiments>
</comment>
<comment type="subcellular location">
    <subcellularLocation>
        <location evidence="1">Endosome membrane</location>
        <topology evidence="1">Single-pass type I membrane protein</topology>
    </subcellularLocation>
    <subcellularLocation>
        <location evidence="1">Cell membrane</location>
        <topology evidence="1">Single-pass type I membrane protein</topology>
    </subcellularLocation>
</comment>
<comment type="tissue specificity">
    <text evidence="6">Detected in macrophages.</text>
</comment>
<comment type="induction">
    <text evidence="6">Down-regulated by interferon gamma.</text>
</comment>
<comment type="online information" name="Functional Glycomics Gateway - Glycan Binding">
    <link uri="http://www.functionalglycomics.org/glycomics/GBPServlet?&amp;operationType=view&amp;cbpId=cbp_mou_Ctlect_181"/>
    <text>Macrophage mannose receptor</text>
</comment>
<protein>
    <recommendedName>
        <fullName>Macrophage mannose receptor 1</fullName>
        <shortName>MMR</shortName>
    </recommendedName>
    <cdAntigenName>CD206</cdAntigenName>
</protein>
<proteinExistence type="evidence at protein level"/>
<gene>
    <name type="primary">Mrc1</name>
</gene>
<feature type="signal peptide" evidence="2">
    <location>
        <begin position="1"/>
        <end position="19"/>
    </location>
</feature>
<feature type="chain" id="PRO_0000017549" description="Macrophage mannose receptor 1">
    <location>
        <begin position="20"/>
        <end position="1456"/>
    </location>
</feature>
<feature type="topological domain" description="Extracellular" evidence="2">
    <location>
        <begin position="20"/>
        <end position="1388"/>
    </location>
</feature>
<feature type="transmembrane region" description="Helical" evidence="2">
    <location>
        <begin position="1389"/>
        <end position="1409"/>
    </location>
</feature>
<feature type="topological domain" description="Cytoplasmic" evidence="2">
    <location>
        <begin position="1410"/>
        <end position="1456"/>
    </location>
</feature>
<feature type="domain" description="Ricin B-type lectin" evidence="4">
    <location>
        <begin position="22"/>
        <end position="142"/>
    </location>
</feature>
<feature type="domain" description="Fibronectin type-II" evidence="5">
    <location>
        <begin position="163"/>
        <end position="211"/>
    </location>
</feature>
<feature type="domain" description="C-type lectin 1" evidence="3">
    <location>
        <begin position="225"/>
        <end position="341"/>
    </location>
</feature>
<feature type="domain" description="C-type lectin 2" evidence="3">
    <location>
        <begin position="369"/>
        <end position="487"/>
    </location>
</feature>
<feature type="domain" description="C-type lectin 3" evidence="3">
    <location>
        <begin position="511"/>
        <end position="626"/>
    </location>
</feature>
<feature type="domain" description="C-type lectin 4" evidence="3">
    <location>
        <begin position="655"/>
        <end position="778"/>
    </location>
</feature>
<feature type="domain" description="C-type lectin 5" evidence="3">
    <location>
        <begin position="807"/>
        <end position="923"/>
    </location>
</feature>
<feature type="domain" description="C-type lectin 6" evidence="3">
    <location>
        <begin position="951"/>
        <end position="1079"/>
    </location>
</feature>
<feature type="domain" description="C-type lectin 7" evidence="3">
    <location>
        <begin position="1101"/>
        <end position="1212"/>
    </location>
</feature>
<feature type="domain" description="C-type lectin 8" evidence="3">
    <location>
        <begin position="1240"/>
        <end position="1355"/>
    </location>
</feature>
<feature type="glycosylation site" description="N-linked (GlcNAc...) asparagine" evidence="2">
    <location>
        <position position="104"/>
    </location>
</feature>
<feature type="glycosylation site" description="N-linked (GlcNAc...) asparagine" evidence="2">
    <location>
        <position position="344"/>
    </location>
</feature>
<feature type="glycosylation site" description="N-linked (GlcNAc...) asparagine" evidence="2">
    <location>
        <position position="529"/>
    </location>
</feature>
<feature type="glycosylation site" description="N-linked (GlcNAc...) asparagine" evidence="2">
    <location>
        <position position="926"/>
    </location>
</feature>
<feature type="glycosylation site" description="N-linked (GlcNAc...) asparagine" evidence="2">
    <location>
        <position position="930"/>
    </location>
</feature>
<feature type="glycosylation site" description="N-linked (GlcNAc...) asparagine" evidence="2">
    <location>
        <position position="1159"/>
    </location>
</feature>
<feature type="glycosylation site" description="N-linked (GlcNAc...) asparagine" evidence="2">
    <location>
        <position position="1204"/>
    </location>
</feature>
<feature type="disulfide bond">
    <location>
        <begin position="35"/>
        <end position="49"/>
    </location>
</feature>
<feature type="disulfide bond">
    <location>
        <begin position="74"/>
        <end position="91"/>
    </location>
</feature>
<feature type="disulfide bond">
    <location>
        <begin position="102"/>
        <end position="149"/>
    </location>
</feature>
<feature type="disulfide bond" evidence="1">
    <location>
        <begin position="168"/>
        <end position="194"/>
    </location>
</feature>
<feature type="disulfide bond" evidence="1">
    <location>
        <begin position="182"/>
        <end position="209"/>
    </location>
</feature>
<feature type="disulfide bond" evidence="1">
    <location>
        <begin position="247"/>
        <end position="340"/>
    </location>
</feature>
<feature type="disulfide bond" evidence="1">
    <location>
        <begin position="316"/>
        <end position="332"/>
    </location>
</feature>
<feature type="disulfide bond" evidence="1">
    <location>
        <begin position="391"/>
        <end position="486"/>
    </location>
</feature>
<feature type="disulfide bond" evidence="1">
    <location>
        <begin position="463"/>
        <end position="478"/>
    </location>
</feature>
<feature type="disulfide bond" evidence="1">
    <location>
        <begin position="532"/>
        <end position="625"/>
    </location>
</feature>
<feature type="disulfide bond" evidence="1">
    <location>
        <begin position="600"/>
        <end position="617"/>
    </location>
</feature>
<feature type="disulfide bond" evidence="1">
    <location>
        <begin position="680"/>
        <end position="777"/>
    </location>
</feature>
<feature type="disulfide bond" evidence="1">
    <location>
        <begin position="753"/>
        <end position="769"/>
    </location>
</feature>
<feature type="disulfide bond" evidence="1">
    <location>
        <begin position="828"/>
        <end position="922"/>
    </location>
</feature>
<feature type="disulfide bond" evidence="1">
    <location>
        <begin position="899"/>
        <end position="914"/>
    </location>
</feature>
<feature type="disulfide bond" evidence="1">
    <location>
        <begin position="976"/>
        <end position="1078"/>
    </location>
</feature>
<feature type="disulfide bond" evidence="1">
    <location>
        <begin position="1051"/>
        <end position="1070"/>
    </location>
</feature>
<feature type="disulfide bond" evidence="1">
    <location>
        <begin position="1122"/>
        <end position="1211"/>
    </location>
</feature>
<feature type="disulfide bond" evidence="1">
    <location>
        <begin position="1189"/>
        <end position="1203"/>
    </location>
</feature>
<feature type="disulfide bond" evidence="1">
    <location>
        <begin position="1262"/>
        <end position="1354"/>
    </location>
</feature>
<feature type="disulfide bond" evidence="1">
    <location>
        <begin position="1331"/>
        <end position="1346"/>
    </location>
</feature>
<feature type="sequence conflict" description="In Ref. 1; CAA78028." evidence="7" ref="1">
    <original>A</original>
    <variation>R</variation>
    <location>
        <position position="826"/>
    </location>
</feature>
<feature type="strand" evidence="8">
    <location>
        <begin position="27"/>
        <end position="29"/>
    </location>
</feature>
<feature type="turn" evidence="8">
    <location>
        <begin position="30"/>
        <end position="33"/>
    </location>
</feature>
<feature type="strand" evidence="8">
    <location>
        <begin position="34"/>
        <end position="40"/>
    </location>
</feature>
<feature type="strand" evidence="8">
    <location>
        <begin position="43"/>
        <end position="48"/>
    </location>
</feature>
<feature type="helix" evidence="8">
    <location>
        <begin position="54"/>
        <end position="56"/>
    </location>
</feature>
<feature type="strand" evidence="8">
    <location>
        <begin position="58"/>
        <end position="64"/>
    </location>
</feature>
<feature type="strand" evidence="8">
    <location>
        <begin position="66"/>
        <end position="68"/>
    </location>
</feature>
<feature type="turn" evidence="8">
    <location>
        <begin position="69"/>
        <end position="72"/>
    </location>
</feature>
<feature type="strand" evidence="8">
    <location>
        <begin position="73"/>
        <end position="76"/>
    </location>
</feature>
<feature type="strand" evidence="8">
    <location>
        <begin position="78"/>
        <end position="80"/>
    </location>
</feature>
<feature type="strand" evidence="8">
    <location>
        <begin position="87"/>
        <end position="89"/>
    </location>
</feature>
<feature type="helix" evidence="9">
    <location>
        <begin position="96"/>
        <end position="98"/>
    </location>
</feature>
<feature type="strand" evidence="8">
    <location>
        <begin position="100"/>
        <end position="102"/>
    </location>
</feature>
<feature type="strand" evidence="8">
    <location>
        <begin position="107"/>
        <end position="110"/>
    </location>
</feature>
<feature type="strand" evidence="8">
    <location>
        <begin position="116"/>
        <end position="118"/>
    </location>
</feature>
<feature type="helix" evidence="8">
    <location>
        <begin position="121"/>
        <end position="123"/>
    </location>
</feature>
<feature type="strand" evidence="8">
    <location>
        <begin position="128"/>
        <end position="131"/>
    </location>
</feature>
<feature type="helix" evidence="8">
    <location>
        <begin position="135"/>
        <end position="137"/>
    </location>
</feature>
<feature type="strand" evidence="8">
    <location>
        <begin position="144"/>
        <end position="147"/>
    </location>
</feature>
<feature type="helix" evidence="8">
    <location>
        <begin position="148"/>
        <end position="151"/>
    </location>
</feature>
<organism>
    <name type="scientific">Mus musculus</name>
    <name type="common">Mouse</name>
    <dbReference type="NCBI Taxonomy" id="10090"/>
    <lineage>
        <taxon>Eukaryota</taxon>
        <taxon>Metazoa</taxon>
        <taxon>Chordata</taxon>
        <taxon>Craniata</taxon>
        <taxon>Vertebrata</taxon>
        <taxon>Euteleostomi</taxon>
        <taxon>Mammalia</taxon>
        <taxon>Eutheria</taxon>
        <taxon>Euarchontoglires</taxon>
        <taxon>Glires</taxon>
        <taxon>Rodentia</taxon>
        <taxon>Myomorpha</taxon>
        <taxon>Muroidea</taxon>
        <taxon>Muridae</taxon>
        <taxon>Murinae</taxon>
        <taxon>Mus</taxon>
        <taxon>Mus</taxon>
    </lineage>
</organism>